<accession>A4W814</accession>
<comment type="function">
    <text evidence="1">Catalyzes the radical-mediated insertion of two sulfur atoms into the C-6 and C-8 positions of the octanoyl moiety bound to the lipoyl domains of lipoate-dependent enzymes, thereby converting the octanoylated domains into lipoylated derivatives.</text>
</comment>
<comment type="catalytic activity">
    <reaction evidence="1">
        <text>[[Fe-S] cluster scaffold protein carrying a second [4Fe-4S](2+) cluster] + N(6)-octanoyl-L-lysyl-[protein] + 2 oxidized [2Fe-2S]-[ferredoxin] + 2 S-adenosyl-L-methionine + 4 H(+) = [[Fe-S] cluster scaffold protein] + N(6)-[(R)-dihydrolipoyl]-L-lysyl-[protein] + 4 Fe(3+) + 2 hydrogen sulfide + 2 5'-deoxyadenosine + 2 L-methionine + 2 reduced [2Fe-2S]-[ferredoxin]</text>
        <dbReference type="Rhea" id="RHEA:16585"/>
        <dbReference type="Rhea" id="RHEA-COMP:9928"/>
        <dbReference type="Rhea" id="RHEA-COMP:10000"/>
        <dbReference type="Rhea" id="RHEA-COMP:10001"/>
        <dbReference type="Rhea" id="RHEA-COMP:10475"/>
        <dbReference type="Rhea" id="RHEA-COMP:14568"/>
        <dbReference type="Rhea" id="RHEA-COMP:14569"/>
        <dbReference type="ChEBI" id="CHEBI:15378"/>
        <dbReference type="ChEBI" id="CHEBI:17319"/>
        <dbReference type="ChEBI" id="CHEBI:29034"/>
        <dbReference type="ChEBI" id="CHEBI:29919"/>
        <dbReference type="ChEBI" id="CHEBI:33722"/>
        <dbReference type="ChEBI" id="CHEBI:33737"/>
        <dbReference type="ChEBI" id="CHEBI:33738"/>
        <dbReference type="ChEBI" id="CHEBI:57844"/>
        <dbReference type="ChEBI" id="CHEBI:59789"/>
        <dbReference type="ChEBI" id="CHEBI:78809"/>
        <dbReference type="ChEBI" id="CHEBI:83100"/>
        <dbReference type="EC" id="2.8.1.8"/>
    </reaction>
</comment>
<comment type="cofactor">
    <cofactor evidence="1">
        <name>[4Fe-4S] cluster</name>
        <dbReference type="ChEBI" id="CHEBI:49883"/>
    </cofactor>
    <text evidence="1">Binds 2 [4Fe-4S] clusters per subunit. One cluster is coordinated with 3 cysteines and an exchangeable S-adenosyl-L-methionine.</text>
</comment>
<comment type="pathway">
    <text evidence="1">Protein modification; protein lipoylation via endogenous pathway; protein N(6)-(lipoyl)lysine from octanoyl-[acyl-carrier-protein]: step 2/2.</text>
</comment>
<comment type="subcellular location">
    <subcellularLocation>
        <location evidence="1">Cytoplasm</location>
    </subcellularLocation>
</comment>
<comment type="similarity">
    <text evidence="1">Belongs to the radical SAM superfamily. Lipoyl synthase family.</text>
</comment>
<name>LIPA_ENT38</name>
<protein>
    <recommendedName>
        <fullName evidence="1">Lipoyl synthase</fullName>
        <ecNumber evidence="1">2.8.1.8</ecNumber>
    </recommendedName>
    <alternativeName>
        <fullName evidence="1">Lip-syn</fullName>
        <shortName evidence="1">LS</shortName>
    </alternativeName>
    <alternativeName>
        <fullName evidence="1">Lipoate synthase</fullName>
    </alternativeName>
    <alternativeName>
        <fullName evidence="1">Lipoic acid synthase</fullName>
    </alternativeName>
    <alternativeName>
        <fullName evidence="1">Sulfur insertion protein LipA</fullName>
    </alternativeName>
</protein>
<gene>
    <name evidence="1" type="primary">lipA</name>
    <name type="ordered locus">Ent638_1163</name>
</gene>
<keyword id="KW-0004">4Fe-4S</keyword>
<keyword id="KW-0963">Cytoplasm</keyword>
<keyword id="KW-0408">Iron</keyword>
<keyword id="KW-0411">Iron-sulfur</keyword>
<keyword id="KW-0479">Metal-binding</keyword>
<keyword id="KW-0949">S-adenosyl-L-methionine</keyword>
<keyword id="KW-0808">Transferase</keyword>
<reference key="1">
    <citation type="journal article" date="2010" name="PLoS Genet.">
        <title>Genome sequence of the plant growth promoting endophytic bacterium Enterobacter sp. 638.</title>
        <authorList>
            <person name="Taghavi S."/>
            <person name="van der Lelie D."/>
            <person name="Hoffman A."/>
            <person name="Zhang Y.B."/>
            <person name="Walla M.D."/>
            <person name="Vangronsveld J."/>
            <person name="Newman L."/>
            <person name="Monchy S."/>
        </authorList>
    </citation>
    <scope>NUCLEOTIDE SEQUENCE [LARGE SCALE GENOMIC DNA]</scope>
    <source>
        <strain>638</strain>
    </source>
</reference>
<proteinExistence type="inferred from homology"/>
<organism>
    <name type="scientific">Enterobacter sp. (strain 638)</name>
    <dbReference type="NCBI Taxonomy" id="399742"/>
    <lineage>
        <taxon>Bacteria</taxon>
        <taxon>Pseudomonadati</taxon>
        <taxon>Pseudomonadota</taxon>
        <taxon>Gammaproteobacteria</taxon>
        <taxon>Enterobacterales</taxon>
        <taxon>Enterobacteriaceae</taxon>
        <taxon>Enterobacter</taxon>
    </lineage>
</organism>
<dbReference type="EC" id="2.8.1.8" evidence="1"/>
<dbReference type="EMBL" id="CP000653">
    <property type="protein sequence ID" value="ABP59844.1"/>
    <property type="molecule type" value="Genomic_DNA"/>
</dbReference>
<dbReference type="RefSeq" id="WP_012016563.1">
    <property type="nucleotide sequence ID" value="NC_009436.1"/>
</dbReference>
<dbReference type="SMR" id="A4W814"/>
<dbReference type="STRING" id="399742.Ent638_1163"/>
<dbReference type="GeneID" id="93308245"/>
<dbReference type="KEGG" id="ent:Ent638_1163"/>
<dbReference type="eggNOG" id="COG0320">
    <property type="taxonomic scope" value="Bacteria"/>
</dbReference>
<dbReference type="HOGENOM" id="CLU_033144_2_1_6"/>
<dbReference type="OrthoDB" id="9787898at2"/>
<dbReference type="UniPathway" id="UPA00538">
    <property type="reaction ID" value="UER00593"/>
</dbReference>
<dbReference type="Proteomes" id="UP000000230">
    <property type="component" value="Chromosome"/>
</dbReference>
<dbReference type="GO" id="GO:0005737">
    <property type="term" value="C:cytoplasm"/>
    <property type="evidence" value="ECO:0007669"/>
    <property type="project" value="UniProtKB-SubCell"/>
</dbReference>
<dbReference type="GO" id="GO:0051539">
    <property type="term" value="F:4 iron, 4 sulfur cluster binding"/>
    <property type="evidence" value="ECO:0007669"/>
    <property type="project" value="UniProtKB-UniRule"/>
</dbReference>
<dbReference type="GO" id="GO:0016992">
    <property type="term" value="F:lipoate synthase activity"/>
    <property type="evidence" value="ECO:0007669"/>
    <property type="project" value="UniProtKB-UniRule"/>
</dbReference>
<dbReference type="GO" id="GO:0046872">
    <property type="term" value="F:metal ion binding"/>
    <property type="evidence" value="ECO:0007669"/>
    <property type="project" value="UniProtKB-KW"/>
</dbReference>
<dbReference type="CDD" id="cd01335">
    <property type="entry name" value="Radical_SAM"/>
    <property type="match status" value="1"/>
</dbReference>
<dbReference type="FunFam" id="3.20.20.70:FF:000023">
    <property type="entry name" value="Lipoyl synthase"/>
    <property type="match status" value="1"/>
</dbReference>
<dbReference type="Gene3D" id="3.20.20.70">
    <property type="entry name" value="Aldolase class I"/>
    <property type="match status" value="1"/>
</dbReference>
<dbReference type="HAMAP" id="MF_00206">
    <property type="entry name" value="Lipoyl_synth"/>
    <property type="match status" value="1"/>
</dbReference>
<dbReference type="InterPro" id="IPR013785">
    <property type="entry name" value="Aldolase_TIM"/>
</dbReference>
<dbReference type="InterPro" id="IPR006638">
    <property type="entry name" value="Elp3/MiaA/NifB-like_rSAM"/>
</dbReference>
<dbReference type="InterPro" id="IPR031691">
    <property type="entry name" value="LIAS_N"/>
</dbReference>
<dbReference type="InterPro" id="IPR003698">
    <property type="entry name" value="Lipoyl_synth"/>
</dbReference>
<dbReference type="InterPro" id="IPR007197">
    <property type="entry name" value="rSAM"/>
</dbReference>
<dbReference type="NCBIfam" id="TIGR00510">
    <property type="entry name" value="lipA"/>
    <property type="match status" value="1"/>
</dbReference>
<dbReference type="NCBIfam" id="NF004019">
    <property type="entry name" value="PRK05481.1"/>
    <property type="match status" value="1"/>
</dbReference>
<dbReference type="NCBIfam" id="NF009544">
    <property type="entry name" value="PRK12928.1"/>
    <property type="match status" value="1"/>
</dbReference>
<dbReference type="PANTHER" id="PTHR10949">
    <property type="entry name" value="LIPOYL SYNTHASE"/>
    <property type="match status" value="1"/>
</dbReference>
<dbReference type="PANTHER" id="PTHR10949:SF0">
    <property type="entry name" value="LIPOYL SYNTHASE, MITOCHONDRIAL"/>
    <property type="match status" value="1"/>
</dbReference>
<dbReference type="Pfam" id="PF16881">
    <property type="entry name" value="LIAS_N"/>
    <property type="match status" value="1"/>
</dbReference>
<dbReference type="Pfam" id="PF04055">
    <property type="entry name" value="Radical_SAM"/>
    <property type="match status" value="1"/>
</dbReference>
<dbReference type="PIRSF" id="PIRSF005963">
    <property type="entry name" value="Lipoyl_synth"/>
    <property type="match status" value="1"/>
</dbReference>
<dbReference type="SFLD" id="SFLDF00271">
    <property type="entry name" value="lipoyl_synthase"/>
    <property type="match status" value="1"/>
</dbReference>
<dbReference type="SFLD" id="SFLDS00029">
    <property type="entry name" value="Radical_SAM"/>
    <property type="match status" value="1"/>
</dbReference>
<dbReference type="SMART" id="SM00729">
    <property type="entry name" value="Elp3"/>
    <property type="match status" value="1"/>
</dbReference>
<dbReference type="SUPFAM" id="SSF102114">
    <property type="entry name" value="Radical SAM enzymes"/>
    <property type="match status" value="1"/>
</dbReference>
<dbReference type="PROSITE" id="PS51918">
    <property type="entry name" value="RADICAL_SAM"/>
    <property type="match status" value="1"/>
</dbReference>
<evidence type="ECO:0000255" key="1">
    <source>
        <dbReference type="HAMAP-Rule" id="MF_00206"/>
    </source>
</evidence>
<evidence type="ECO:0000255" key="2">
    <source>
        <dbReference type="PROSITE-ProRule" id="PRU01266"/>
    </source>
</evidence>
<feature type="chain" id="PRO_1000058576" description="Lipoyl synthase">
    <location>
        <begin position="1"/>
        <end position="321"/>
    </location>
</feature>
<feature type="domain" description="Radical SAM core" evidence="2">
    <location>
        <begin position="80"/>
        <end position="297"/>
    </location>
</feature>
<feature type="binding site" evidence="1">
    <location>
        <position position="68"/>
    </location>
    <ligand>
        <name>[4Fe-4S] cluster</name>
        <dbReference type="ChEBI" id="CHEBI:49883"/>
        <label>1</label>
    </ligand>
</feature>
<feature type="binding site" evidence="1">
    <location>
        <position position="73"/>
    </location>
    <ligand>
        <name>[4Fe-4S] cluster</name>
        <dbReference type="ChEBI" id="CHEBI:49883"/>
        <label>1</label>
    </ligand>
</feature>
<feature type="binding site" evidence="1">
    <location>
        <position position="79"/>
    </location>
    <ligand>
        <name>[4Fe-4S] cluster</name>
        <dbReference type="ChEBI" id="CHEBI:49883"/>
        <label>1</label>
    </ligand>
</feature>
<feature type="binding site" evidence="1">
    <location>
        <position position="94"/>
    </location>
    <ligand>
        <name>[4Fe-4S] cluster</name>
        <dbReference type="ChEBI" id="CHEBI:49883"/>
        <label>2</label>
        <note>4Fe-4S-S-AdoMet</note>
    </ligand>
</feature>
<feature type="binding site" evidence="1">
    <location>
        <position position="98"/>
    </location>
    <ligand>
        <name>[4Fe-4S] cluster</name>
        <dbReference type="ChEBI" id="CHEBI:49883"/>
        <label>2</label>
        <note>4Fe-4S-S-AdoMet</note>
    </ligand>
</feature>
<feature type="binding site" evidence="1">
    <location>
        <position position="101"/>
    </location>
    <ligand>
        <name>[4Fe-4S] cluster</name>
        <dbReference type="ChEBI" id="CHEBI:49883"/>
        <label>2</label>
        <note>4Fe-4S-S-AdoMet</note>
    </ligand>
</feature>
<feature type="binding site" evidence="1">
    <location>
        <position position="308"/>
    </location>
    <ligand>
        <name>[4Fe-4S] cluster</name>
        <dbReference type="ChEBI" id="CHEBI:49883"/>
        <label>1</label>
    </ligand>
</feature>
<sequence length="321" mass="36029">MSKPIVMERGVKYRDADKMALIPVKNVVTEREALLRKPEWMKIKLPADSSRIQGIKAAMRKNGLHSVCEEASCPNLAECFNHGTATFMILGAICTRRCPFCDVAHGRPVAPDANEPLKLAQTIADMALRYVVITSVDRDDLRDGGAQHFADCISAIREKSPSIKIETLVPDFRGRMDRALEILTATPPDVFNHNLENVPRVYRQVRPGADYNWSLKLLERFKEAHPHIPTKSGLMVGLGETNAEIIEVMRDLRRHGVTMLTLGQYLQPSRHHLPVQRYVSPDEFDEMKAEAMAMGFTHAACGPFVRSSYHADMQAKGEEVK</sequence>